<name>UNG2_BACFN</name>
<protein>
    <recommendedName>
        <fullName evidence="1">Uracil-DNA glycosylase 2</fullName>
        <shortName evidence="1">UDG 2</shortName>
        <ecNumber evidence="1">3.2.2.27</ecNumber>
    </recommendedName>
</protein>
<proteinExistence type="inferred from homology"/>
<evidence type="ECO:0000255" key="1">
    <source>
        <dbReference type="HAMAP-Rule" id="MF_00148"/>
    </source>
</evidence>
<accession>Q5L9D9</accession>
<feature type="chain" id="PRO_0000176060" description="Uracil-DNA glycosylase 2">
    <location>
        <begin position="1"/>
        <end position="220"/>
    </location>
</feature>
<feature type="active site" description="Proton acceptor" evidence="1">
    <location>
        <position position="65"/>
    </location>
</feature>
<sequence>MNVQIEESWKTHLEPEFEKDYFRTLTEFVRSEYSQYQIFPPGKLIFNAFNLCPFDKVKVVIIGQDPYHGPGQAHGLCFSVNDGVAFPPSLVNIFKEIKEDIGTPAPSTGNLTRWAEQGVLLLNATLTVRAHQAGSHQRRGWEEFTDAAIRVLAEERENLVFILWGSYAQKKGAFIDRNKHLVLSSAHPSPLSAYNGFFGNKHFSKTNEYLKAHGKTEINW</sequence>
<reference key="1">
    <citation type="journal article" date="2005" name="Science">
        <title>Extensive DNA inversions in the B. fragilis genome control variable gene expression.</title>
        <authorList>
            <person name="Cerdeno-Tarraga A.-M."/>
            <person name="Patrick S."/>
            <person name="Crossman L.C."/>
            <person name="Blakely G."/>
            <person name="Abratt V."/>
            <person name="Lennard N."/>
            <person name="Poxton I."/>
            <person name="Duerden B."/>
            <person name="Harris B."/>
            <person name="Quail M.A."/>
            <person name="Barron A."/>
            <person name="Clark L."/>
            <person name="Corton C."/>
            <person name="Doggett J."/>
            <person name="Holden M.T.G."/>
            <person name="Larke N."/>
            <person name="Line A."/>
            <person name="Lord A."/>
            <person name="Norbertczak H."/>
            <person name="Ormond D."/>
            <person name="Price C."/>
            <person name="Rabbinowitsch E."/>
            <person name="Woodward J."/>
            <person name="Barrell B.G."/>
            <person name="Parkhill J."/>
        </authorList>
    </citation>
    <scope>NUCLEOTIDE SEQUENCE [LARGE SCALE GENOMIC DNA]</scope>
    <source>
        <strain>ATCC 25285 / DSM 2151 / CCUG 4856 / JCM 11019 / LMG 10263 / NCTC 9343 / Onslow / VPI 2553 / EN-2</strain>
    </source>
</reference>
<gene>
    <name evidence="1" type="primary">ung2</name>
    <name type="ordered locus">BF3608</name>
</gene>
<keyword id="KW-0963">Cytoplasm</keyword>
<keyword id="KW-0227">DNA damage</keyword>
<keyword id="KW-0234">DNA repair</keyword>
<keyword id="KW-0378">Hydrolase</keyword>
<dbReference type="EC" id="3.2.2.27" evidence="1"/>
<dbReference type="EMBL" id="CR626927">
    <property type="protein sequence ID" value="CAH09289.1"/>
    <property type="molecule type" value="Genomic_DNA"/>
</dbReference>
<dbReference type="SMR" id="Q5L9D9"/>
<dbReference type="PaxDb" id="272559-BF9343_3508"/>
<dbReference type="KEGG" id="bfs:BF9343_3508"/>
<dbReference type="eggNOG" id="COG0692">
    <property type="taxonomic scope" value="Bacteria"/>
</dbReference>
<dbReference type="HOGENOM" id="CLU_032162_3_0_10"/>
<dbReference type="Proteomes" id="UP000006731">
    <property type="component" value="Chromosome"/>
</dbReference>
<dbReference type="GO" id="GO:0005737">
    <property type="term" value="C:cytoplasm"/>
    <property type="evidence" value="ECO:0007669"/>
    <property type="project" value="UniProtKB-SubCell"/>
</dbReference>
<dbReference type="GO" id="GO:0004844">
    <property type="term" value="F:uracil DNA N-glycosylase activity"/>
    <property type="evidence" value="ECO:0007669"/>
    <property type="project" value="UniProtKB-UniRule"/>
</dbReference>
<dbReference type="GO" id="GO:0097510">
    <property type="term" value="P:base-excision repair, AP site formation via deaminated base removal"/>
    <property type="evidence" value="ECO:0007669"/>
    <property type="project" value="TreeGrafter"/>
</dbReference>
<dbReference type="CDD" id="cd10027">
    <property type="entry name" value="UDG-F1-like"/>
    <property type="match status" value="1"/>
</dbReference>
<dbReference type="FunFam" id="3.40.470.10:FF:000001">
    <property type="entry name" value="Uracil-DNA glycosylase"/>
    <property type="match status" value="1"/>
</dbReference>
<dbReference type="Gene3D" id="3.40.470.10">
    <property type="entry name" value="Uracil-DNA glycosylase-like domain"/>
    <property type="match status" value="1"/>
</dbReference>
<dbReference type="HAMAP" id="MF_00148">
    <property type="entry name" value="UDG"/>
    <property type="match status" value="1"/>
</dbReference>
<dbReference type="InterPro" id="IPR002043">
    <property type="entry name" value="UDG_fam1"/>
</dbReference>
<dbReference type="InterPro" id="IPR018085">
    <property type="entry name" value="Ura-DNA_Glyclase_AS"/>
</dbReference>
<dbReference type="InterPro" id="IPR005122">
    <property type="entry name" value="Uracil-DNA_glycosylase-like"/>
</dbReference>
<dbReference type="InterPro" id="IPR036895">
    <property type="entry name" value="Uracil-DNA_glycosylase-like_sf"/>
</dbReference>
<dbReference type="NCBIfam" id="NF003588">
    <property type="entry name" value="PRK05254.1-1"/>
    <property type="match status" value="1"/>
</dbReference>
<dbReference type="NCBIfam" id="NF003589">
    <property type="entry name" value="PRK05254.1-2"/>
    <property type="match status" value="1"/>
</dbReference>
<dbReference type="NCBIfam" id="NF003591">
    <property type="entry name" value="PRK05254.1-4"/>
    <property type="match status" value="1"/>
</dbReference>
<dbReference type="NCBIfam" id="NF003592">
    <property type="entry name" value="PRK05254.1-5"/>
    <property type="match status" value="1"/>
</dbReference>
<dbReference type="NCBIfam" id="TIGR00628">
    <property type="entry name" value="ung"/>
    <property type="match status" value="1"/>
</dbReference>
<dbReference type="PANTHER" id="PTHR11264">
    <property type="entry name" value="URACIL-DNA GLYCOSYLASE"/>
    <property type="match status" value="1"/>
</dbReference>
<dbReference type="PANTHER" id="PTHR11264:SF0">
    <property type="entry name" value="URACIL-DNA GLYCOSYLASE"/>
    <property type="match status" value="1"/>
</dbReference>
<dbReference type="Pfam" id="PF03167">
    <property type="entry name" value="UDG"/>
    <property type="match status" value="1"/>
</dbReference>
<dbReference type="SMART" id="SM00986">
    <property type="entry name" value="UDG"/>
    <property type="match status" value="1"/>
</dbReference>
<dbReference type="SMART" id="SM00987">
    <property type="entry name" value="UreE_C"/>
    <property type="match status" value="1"/>
</dbReference>
<dbReference type="SUPFAM" id="SSF52141">
    <property type="entry name" value="Uracil-DNA glycosylase-like"/>
    <property type="match status" value="1"/>
</dbReference>
<dbReference type="PROSITE" id="PS00130">
    <property type="entry name" value="U_DNA_GLYCOSYLASE"/>
    <property type="match status" value="1"/>
</dbReference>
<organism>
    <name type="scientific">Bacteroides fragilis (strain ATCC 25285 / DSM 2151 / CCUG 4856 / JCM 11019 / LMG 10263 / NCTC 9343 / Onslow / VPI 2553 / EN-2)</name>
    <dbReference type="NCBI Taxonomy" id="272559"/>
    <lineage>
        <taxon>Bacteria</taxon>
        <taxon>Pseudomonadati</taxon>
        <taxon>Bacteroidota</taxon>
        <taxon>Bacteroidia</taxon>
        <taxon>Bacteroidales</taxon>
        <taxon>Bacteroidaceae</taxon>
        <taxon>Bacteroides</taxon>
    </lineage>
</organism>
<comment type="function">
    <text evidence="1">Excises uracil residues from the DNA which can arise as a result of misincorporation of dUMP residues by DNA polymerase or due to deamination of cytosine.</text>
</comment>
<comment type="catalytic activity">
    <reaction evidence="1">
        <text>Hydrolyzes single-stranded DNA or mismatched double-stranded DNA and polynucleotides, releasing free uracil.</text>
        <dbReference type="EC" id="3.2.2.27"/>
    </reaction>
</comment>
<comment type="subcellular location">
    <subcellularLocation>
        <location evidence="1">Cytoplasm</location>
    </subcellularLocation>
</comment>
<comment type="similarity">
    <text evidence="1">Belongs to the uracil-DNA glycosylase (UDG) superfamily. UNG family.</text>
</comment>